<keyword id="KW-0240">DNA-directed RNA polymerase</keyword>
<keyword id="KW-0548">Nucleotidyltransferase</keyword>
<keyword id="KW-1185">Reference proteome</keyword>
<keyword id="KW-0804">Transcription</keyword>
<keyword id="KW-0808">Transferase</keyword>
<comment type="function">
    <text evidence="1">Promotes RNA polymerase assembly. Latches the N- and C-terminal regions of the beta' subunit thereby facilitating its interaction with the beta and alpha subunits.</text>
</comment>
<comment type="catalytic activity">
    <reaction evidence="1">
        <text>RNA(n) + a ribonucleoside 5'-triphosphate = RNA(n+1) + diphosphate</text>
        <dbReference type="Rhea" id="RHEA:21248"/>
        <dbReference type="Rhea" id="RHEA-COMP:14527"/>
        <dbReference type="Rhea" id="RHEA-COMP:17342"/>
        <dbReference type="ChEBI" id="CHEBI:33019"/>
        <dbReference type="ChEBI" id="CHEBI:61557"/>
        <dbReference type="ChEBI" id="CHEBI:140395"/>
        <dbReference type="EC" id="2.7.7.6"/>
    </reaction>
</comment>
<comment type="subunit">
    <text evidence="1">The RNAP catalytic core consists of 2 alpha, 1 beta, 1 beta' and 1 omega subunit. When a sigma factor is associated with the core the holoenzyme is formed, which can initiate transcription.</text>
</comment>
<comment type="similarity">
    <text evidence="1">Belongs to the RNA polymerase subunit omega family.</text>
</comment>
<evidence type="ECO:0000255" key="1">
    <source>
        <dbReference type="HAMAP-Rule" id="MF_00366"/>
    </source>
</evidence>
<organism>
    <name type="scientific">Salinispora tropica (strain ATCC BAA-916 / DSM 44818 / JCM 13857 / NBRC 105044 / CNB-440)</name>
    <dbReference type="NCBI Taxonomy" id="369723"/>
    <lineage>
        <taxon>Bacteria</taxon>
        <taxon>Bacillati</taxon>
        <taxon>Actinomycetota</taxon>
        <taxon>Actinomycetes</taxon>
        <taxon>Micromonosporales</taxon>
        <taxon>Micromonosporaceae</taxon>
        <taxon>Salinispora</taxon>
    </lineage>
</organism>
<dbReference type="EC" id="2.7.7.6" evidence="1"/>
<dbReference type="EMBL" id="CP000667">
    <property type="protein sequence ID" value="ABP54324.1"/>
    <property type="molecule type" value="Genomic_DNA"/>
</dbReference>
<dbReference type="RefSeq" id="WP_011905754.1">
    <property type="nucleotide sequence ID" value="NC_009380.1"/>
</dbReference>
<dbReference type="SMR" id="A4X624"/>
<dbReference type="STRING" id="369723.Strop_1862"/>
<dbReference type="KEGG" id="stp:Strop_1862"/>
<dbReference type="PATRIC" id="fig|369723.5.peg.1910"/>
<dbReference type="eggNOG" id="COG1758">
    <property type="taxonomic scope" value="Bacteria"/>
</dbReference>
<dbReference type="HOGENOM" id="CLU_125406_1_1_11"/>
<dbReference type="Proteomes" id="UP000000235">
    <property type="component" value="Chromosome"/>
</dbReference>
<dbReference type="GO" id="GO:0000428">
    <property type="term" value="C:DNA-directed RNA polymerase complex"/>
    <property type="evidence" value="ECO:0007669"/>
    <property type="project" value="UniProtKB-KW"/>
</dbReference>
<dbReference type="GO" id="GO:0003677">
    <property type="term" value="F:DNA binding"/>
    <property type="evidence" value="ECO:0007669"/>
    <property type="project" value="UniProtKB-UniRule"/>
</dbReference>
<dbReference type="GO" id="GO:0003899">
    <property type="term" value="F:DNA-directed RNA polymerase activity"/>
    <property type="evidence" value="ECO:0007669"/>
    <property type="project" value="UniProtKB-UniRule"/>
</dbReference>
<dbReference type="GO" id="GO:0006351">
    <property type="term" value="P:DNA-templated transcription"/>
    <property type="evidence" value="ECO:0007669"/>
    <property type="project" value="UniProtKB-UniRule"/>
</dbReference>
<dbReference type="Gene3D" id="3.90.940.10">
    <property type="match status" value="1"/>
</dbReference>
<dbReference type="HAMAP" id="MF_00366">
    <property type="entry name" value="RNApol_bact_RpoZ"/>
    <property type="match status" value="1"/>
</dbReference>
<dbReference type="InterPro" id="IPR003716">
    <property type="entry name" value="DNA-dir_RNA_pol_omega"/>
</dbReference>
<dbReference type="InterPro" id="IPR006110">
    <property type="entry name" value="Pol_omega/Rpo6/RPB6"/>
</dbReference>
<dbReference type="InterPro" id="IPR036161">
    <property type="entry name" value="RPB6/omega-like_sf"/>
</dbReference>
<dbReference type="NCBIfam" id="TIGR00690">
    <property type="entry name" value="rpoZ"/>
    <property type="match status" value="1"/>
</dbReference>
<dbReference type="PANTHER" id="PTHR34476">
    <property type="entry name" value="DNA-DIRECTED RNA POLYMERASE SUBUNIT OMEGA"/>
    <property type="match status" value="1"/>
</dbReference>
<dbReference type="PANTHER" id="PTHR34476:SF1">
    <property type="entry name" value="DNA-DIRECTED RNA POLYMERASE SUBUNIT OMEGA"/>
    <property type="match status" value="1"/>
</dbReference>
<dbReference type="Pfam" id="PF01192">
    <property type="entry name" value="RNA_pol_Rpb6"/>
    <property type="match status" value="1"/>
</dbReference>
<dbReference type="SMART" id="SM01409">
    <property type="entry name" value="RNA_pol_Rpb6"/>
    <property type="match status" value="1"/>
</dbReference>
<dbReference type="SUPFAM" id="SSF63562">
    <property type="entry name" value="RPB6/omega subunit-like"/>
    <property type="match status" value="1"/>
</dbReference>
<reference key="1">
    <citation type="journal article" date="2007" name="Proc. Natl. Acad. Sci. U.S.A.">
        <title>Genome sequencing reveals complex secondary metabolome in the marine actinomycete Salinispora tropica.</title>
        <authorList>
            <person name="Udwary D.W."/>
            <person name="Zeigler L."/>
            <person name="Asolkar R.N."/>
            <person name="Singan V."/>
            <person name="Lapidus A."/>
            <person name="Fenical W."/>
            <person name="Jensen P.R."/>
            <person name="Moore B.S."/>
        </authorList>
    </citation>
    <scope>NUCLEOTIDE SEQUENCE [LARGE SCALE GENOMIC DNA]</scope>
    <source>
        <strain>ATCC BAA-916 / DSM 44818 / JCM 13857 / NBRC 105044 / CNB-440</strain>
    </source>
</reference>
<proteinExistence type="inferred from homology"/>
<protein>
    <recommendedName>
        <fullName evidence="1">DNA-directed RNA polymerase subunit omega</fullName>
        <shortName evidence="1">RNAP omega subunit</shortName>
        <ecNumber evidence="1">2.7.7.6</ecNumber>
    </recommendedName>
    <alternativeName>
        <fullName evidence="1">RNA polymerase omega subunit</fullName>
    </alternativeName>
    <alternativeName>
        <fullName evidence="1">Transcriptase subunit omega</fullName>
    </alternativeName>
</protein>
<feature type="chain" id="PRO_1000079645" description="DNA-directed RNA polymerase subunit omega">
    <location>
        <begin position="1"/>
        <end position="88"/>
    </location>
</feature>
<gene>
    <name evidence="1" type="primary">rpoZ</name>
    <name type="ordered locus">Strop_1862</name>
</gene>
<name>RPOZ_SALTO</name>
<sequence length="88" mass="9532">MGSIATNPEGITNPPIDELLEKTTSKYALVIFAAKRARQVNAYYSQLGEGLLEYVGPLVETTPQEKPLSIAMREINGGLLTAEPTDQP</sequence>
<accession>A4X624</accession>